<organism>
    <name type="scientific">Escherichia coli (strain K12 / MC4100 / BW2952)</name>
    <dbReference type="NCBI Taxonomy" id="595496"/>
    <lineage>
        <taxon>Bacteria</taxon>
        <taxon>Pseudomonadati</taxon>
        <taxon>Pseudomonadota</taxon>
        <taxon>Gammaproteobacteria</taxon>
        <taxon>Enterobacterales</taxon>
        <taxon>Enterobacteriaceae</taxon>
        <taxon>Escherichia</taxon>
    </lineage>
</organism>
<dbReference type="EMBL" id="CP001396">
    <property type="protein sequence ID" value="ACR63685.1"/>
    <property type="molecule type" value="Genomic_DNA"/>
</dbReference>
<dbReference type="RefSeq" id="WP_000107723.1">
    <property type="nucleotide sequence ID" value="NC_012759.1"/>
</dbReference>
<dbReference type="SMR" id="C4ZR30"/>
<dbReference type="GeneID" id="93778869"/>
<dbReference type="KEGG" id="ebw:BWG_2824"/>
<dbReference type="HOGENOM" id="CLU_052043_1_1_6"/>
<dbReference type="GO" id="GO:0005886">
    <property type="term" value="C:plasma membrane"/>
    <property type="evidence" value="ECO:0007669"/>
    <property type="project" value="UniProtKB-SubCell"/>
</dbReference>
<dbReference type="GO" id="GO:0015194">
    <property type="term" value="F:L-serine transmembrane transporter activity"/>
    <property type="evidence" value="ECO:0007669"/>
    <property type="project" value="InterPro"/>
</dbReference>
<dbReference type="GO" id="GO:0015293">
    <property type="term" value="F:symporter activity"/>
    <property type="evidence" value="ECO:0007669"/>
    <property type="project" value="UniProtKB-UniRule"/>
</dbReference>
<dbReference type="GO" id="GO:0015565">
    <property type="term" value="F:threonine efflux transmembrane transporter activity"/>
    <property type="evidence" value="ECO:0007669"/>
    <property type="project" value="InterPro"/>
</dbReference>
<dbReference type="HAMAP" id="MF_01583">
    <property type="entry name" value="Thr_Ser_transp_TdcC"/>
    <property type="match status" value="1"/>
</dbReference>
<dbReference type="InterPro" id="IPR018227">
    <property type="entry name" value="Amino_acid_transport_2"/>
</dbReference>
<dbReference type="InterPro" id="IPR004694">
    <property type="entry name" value="Hydroxy_aa_transpt"/>
</dbReference>
<dbReference type="InterPro" id="IPR023726">
    <property type="entry name" value="Thr/Ser_transpt_TdcC"/>
</dbReference>
<dbReference type="NCBIfam" id="NF010152">
    <property type="entry name" value="PRK13629.1"/>
    <property type="match status" value="1"/>
</dbReference>
<dbReference type="NCBIfam" id="TIGR00814">
    <property type="entry name" value="stp"/>
    <property type="match status" value="1"/>
</dbReference>
<dbReference type="PANTHER" id="PTHR35334">
    <property type="entry name" value="SERINE TRANSPORTER"/>
    <property type="match status" value="1"/>
</dbReference>
<dbReference type="PANTHER" id="PTHR35334:SF1">
    <property type="entry name" value="THREONINE_SERINE TRANSPORTER TDCC"/>
    <property type="match status" value="1"/>
</dbReference>
<dbReference type="Pfam" id="PF03222">
    <property type="entry name" value="Trp_Tyr_perm"/>
    <property type="match status" value="1"/>
</dbReference>
<evidence type="ECO:0000255" key="1">
    <source>
        <dbReference type="HAMAP-Rule" id="MF_01583"/>
    </source>
</evidence>
<feature type="chain" id="PRO_1000215624" description="Threonine/serine transporter TdcC">
    <location>
        <begin position="1"/>
        <end position="443"/>
    </location>
</feature>
<feature type="transmembrane region" description="Helical" evidence="1">
    <location>
        <begin position="22"/>
        <end position="42"/>
    </location>
</feature>
<feature type="transmembrane region" description="Helical" evidence="1">
    <location>
        <begin position="44"/>
        <end position="64"/>
    </location>
</feature>
<feature type="transmembrane region" description="Helical" evidence="1">
    <location>
        <begin position="97"/>
        <end position="117"/>
    </location>
</feature>
<feature type="transmembrane region" description="Helical" evidence="1">
    <location>
        <begin position="140"/>
        <end position="160"/>
    </location>
</feature>
<feature type="transmembrane region" description="Helical" evidence="1">
    <location>
        <begin position="163"/>
        <end position="183"/>
    </location>
</feature>
<feature type="transmembrane region" description="Helical" evidence="1">
    <location>
        <begin position="207"/>
        <end position="227"/>
    </location>
</feature>
<feature type="transmembrane region" description="Helical" evidence="1">
    <location>
        <begin position="261"/>
        <end position="281"/>
    </location>
</feature>
<feature type="transmembrane region" description="Helical" evidence="1">
    <location>
        <begin position="311"/>
        <end position="331"/>
    </location>
</feature>
<feature type="transmembrane region" description="Helical" evidence="1">
    <location>
        <begin position="366"/>
        <end position="386"/>
    </location>
</feature>
<feature type="transmembrane region" description="Helical" evidence="1">
    <location>
        <begin position="389"/>
        <end position="409"/>
    </location>
</feature>
<feature type="transmembrane region" description="Helical" evidence="1">
    <location>
        <begin position="423"/>
        <end position="443"/>
    </location>
</feature>
<sequence>MSTSDSIVSSQTKQSSWRKSDTTWTLGLFGTAIGAGVLFFPIRAGFGGLIPILLMLVLAYPIAFYCHRALARLCLSGSNPSGNITETVEEHFGKTGGVVITFLYFFAICPLLWIYGVTITNTFMTFWENQLGFAPLNRGFVALFLLLLMAFVIWFGKDLMVKVMSYLVWPFIASLVLISLSLIPYWNSAVIDQVDLGSLSLTGHDGILITVWLGISIMVFSFNFSPIVSSFVVSKREEYEKDFGRDFTERKCSQIISRASMLMVAVVMFFAFSCLFTLSPANMAEAKAQNIPVLSYLANHFASMTGTKTTFAITLEYAASIIALVAIFKSFFGHYLGTLEGLNGLVLKFGYKGDKTKVSLGKLNTISMIFIMGSTWVVAYANPNILDLIEAMGAPIIASLLCLLPMYAIRKAPSLAKYRGRLDNVFVTVIGLLTILNIVYKLF</sequence>
<proteinExistence type="inferred from homology"/>
<protein>
    <recommendedName>
        <fullName evidence="1">Threonine/serine transporter TdcC</fullName>
    </recommendedName>
    <alternativeName>
        <fullName evidence="1">H(+)/threonine-serine symporter</fullName>
    </alternativeName>
</protein>
<keyword id="KW-0029">Amino-acid transport</keyword>
<keyword id="KW-0997">Cell inner membrane</keyword>
<keyword id="KW-1003">Cell membrane</keyword>
<keyword id="KW-0472">Membrane</keyword>
<keyword id="KW-0769">Symport</keyword>
<keyword id="KW-0812">Transmembrane</keyword>
<keyword id="KW-1133">Transmembrane helix</keyword>
<keyword id="KW-0813">Transport</keyword>
<accession>C4ZR30</accession>
<gene>
    <name evidence="1" type="primary">tdcC</name>
    <name type="ordered locus">BWG_2824</name>
</gene>
<comment type="function">
    <text evidence="1">Involved in the import of threonine and serine into the cell, with the concomitant import of a proton (symport system).</text>
</comment>
<comment type="catalytic activity">
    <reaction evidence="1">
        <text>L-threonine(in) + H(+)(in) = L-threonine(out) + H(+)(out)</text>
        <dbReference type="Rhea" id="RHEA:28883"/>
        <dbReference type="ChEBI" id="CHEBI:15378"/>
        <dbReference type="ChEBI" id="CHEBI:57926"/>
    </reaction>
    <physiologicalReaction direction="right-to-left" evidence="1">
        <dbReference type="Rhea" id="RHEA:28885"/>
    </physiologicalReaction>
</comment>
<comment type="catalytic activity">
    <reaction evidence="1">
        <text>L-serine(in) + H(+)(in) = L-serine(out) + H(+)(out)</text>
        <dbReference type="Rhea" id="RHEA:28887"/>
        <dbReference type="ChEBI" id="CHEBI:15378"/>
        <dbReference type="ChEBI" id="CHEBI:33384"/>
    </reaction>
    <physiologicalReaction direction="right-to-left" evidence="1">
        <dbReference type="Rhea" id="RHEA:28889"/>
    </physiologicalReaction>
</comment>
<comment type="subcellular location">
    <subcellularLocation>
        <location evidence="1">Cell inner membrane</location>
        <topology evidence="1">Multi-pass membrane protein</topology>
    </subcellularLocation>
</comment>
<comment type="similarity">
    <text evidence="1">Belongs to the amino acid/polyamine transporter 2 family. SdaC/TdcC subfamily.</text>
</comment>
<reference key="1">
    <citation type="journal article" date="2009" name="J. Bacteriol.">
        <title>Genomic sequencing reveals regulatory mutations and recombinational events in the widely used MC4100 lineage of Escherichia coli K-12.</title>
        <authorList>
            <person name="Ferenci T."/>
            <person name="Zhou Z."/>
            <person name="Betteridge T."/>
            <person name="Ren Y."/>
            <person name="Liu Y."/>
            <person name="Feng L."/>
            <person name="Reeves P.R."/>
            <person name="Wang L."/>
        </authorList>
    </citation>
    <scope>NUCLEOTIDE SEQUENCE [LARGE SCALE GENOMIC DNA]</scope>
    <source>
        <strain>K12 / MC4100 / BW2952</strain>
    </source>
</reference>
<name>TDCC_ECOBW</name>